<dbReference type="EMBL" id="AC244255">
    <property type="status" value="NOT_ANNOTATED_CDS"/>
    <property type="molecule type" value="Genomic_DNA"/>
</dbReference>
<dbReference type="SMR" id="A0A075B6S5"/>
<dbReference type="FunCoup" id="A0A075B6S5">
    <property type="interactions" value="298"/>
</dbReference>
<dbReference type="IMGT_GENE-DB" id="IGKV1-27"/>
<dbReference type="BioMuta" id="IGKV1-27"/>
<dbReference type="jPOST" id="A0A075B6S5"/>
<dbReference type="MassIVE" id="A0A075B6S5"/>
<dbReference type="Ensembl" id="ENST00000498435.1">
    <property type="protein sequence ID" value="ENSP00000418903.1"/>
    <property type="gene ID" value="ENSG00000244575.3"/>
</dbReference>
<dbReference type="Ensembl" id="ENST00000631531.1">
    <property type="protein sequence ID" value="ENSP00000488456.1"/>
    <property type="gene ID" value="ENSG00000282666.1"/>
</dbReference>
<dbReference type="UCSC" id="uc061lqx.1">
    <property type="organism name" value="human"/>
</dbReference>
<dbReference type="AGR" id="HGNC:5735"/>
<dbReference type="GeneCards" id="IGKV1-27"/>
<dbReference type="HGNC" id="HGNC:5735">
    <property type="gene designation" value="IGKV1-27"/>
</dbReference>
<dbReference type="HPA" id="ENSG00000244575">
    <property type="expression patterns" value="Tissue enhanced (intestine, lymphoid tissue)"/>
</dbReference>
<dbReference type="neXtProt" id="NX_A0A075B6S5"/>
<dbReference type="OpenTargets" id="ENSG00000244575"/>
<dbReference type="VEuPathDB" id="HostDB:ENSG00000244575"/>
<dbReference type="GeneTree" id="ENSGT00940000164789"/>
<dbReference type="HOGENOM" id="CLU_077975_4_1_1"/>
<dbReference type="InParanoid" id="A0A075B6S5"/>
<dbReference type="OMA" id="RCAFEMT"/>
<dbReference type="OrthoDB" id="9629570at2759"/>
<dbReference type="PAN-GO" id="A0A075B6S5">
    <property type="GO annotations" value="3 GO annotations based on evolutionary models"/>
</dbReference>
<dbReference type="PhylomeDB" id="A0A075B6S5"/>
<dbReference type="SignaLink" id="A0A075B6S5"/>
<dbReference type="Pharos" id="A0A075B6S5">
    <property type="development level" value="Tdark"/>
</dbReference>
<dbReference type="PRO" id="PR:A0A075B6S5"/>
<dbReference type="Proteomes" id="UP000005640">
    <property type="component" value="Chromosome 2"/>
</dbReference>
<dbReference type="RNAct" id="A0A075B6S5">
    <property type="molecule type" value="protein"/>
</dbReference>
<dbReference type="Bgee" id="ENSG00000244575">
    <property type="expression patterns" value="Expressed in rectum and 88 other cell types or tissues"/>
</dbReference>
<dbReference type="GO" id="GO:0005576">
    <property type="term" value="C:extracellular region"/>
    <property type="evidence" value="ECO:0007669"/>
    <property type="project" value="UniProtKB-SubCell"/>
</dbReference>
<dbReference type="GO" id="GO:0019814">
    <property type="term" value="C:immunoglobulin complex"/>
    <property type="evidence" value="ECO:0000318"/>
    <property type="project" value="GO_Central"/>
</dbReference>
<dbReference type="GO" id="GO:0005886">
    <property type="term" value="C:plasma membrane"/>
    <property type="evidence" value="ECO:0007669"/>
    <property type="project" value="UniProtKB-SubCell"/>
</dbReference>
<dbReference type="GO" id="GO:0002250">
    <property type="term" value="P:adaptive immune response"/>
    <property type="evidence" value="ECO:0007669"/>
    <property type="project" value="UniProtKB-KW"/>
</dbReference>
<dbReference type="GO" id="GO:0006955">
    <property type="term" value="P:immune response"/>
    <property type="evidence" value="ECO:0000318"/>
    <property type="project" value="GO_Central"/>
</dbReference>
<dbReference type="CDD" id="cd04980">
    <property type="entry name" value="IgV_L_kappa"/>
    <property type="match status" value="1"/>
</dbReference>
<dbReference type="FunFam" id="2.60.40.10:FF:000212">
    <property type="entry name" value="Immunoglobulin kappa chain variable 12-38"/>
    <property type="match status" value="1"/>
</dbReference>
<dbReference type="Gene3D" id="2.60.40.10">
    <property type="entry name" value="Immunoglobulins"/>
    <property type="match status" value="1"/>
</dbReference>
<dbReference type="InterPro" id="IPR007110">
    <property type="entry name" value="Ig-like_dom"/>
</dbReference>
<dbReference type="InterPro" id="IPR036179">
    <property type="entry name" value="Ig-like_dom_sf"/>
</dbReference>
<dbReference type="InterPro" id="IPR013783">
    <property type="entry name" value="Ig-like_fold"/>
</dbReference>
<dbReference type="InterPro" id="IPR003599">
    <property type="entry name" value="Ig_sub"/>
</dbReference>
<dbReference type="InterPro" id="IPR013106">
    <property type="entry name" value="Ig_V-set"/>
</dbReference>
<dbReference type="InterPro" id="IPR050150">
    <property type="entry name" value="IgV_Light_Chain"/>
</dbReference>
<dbReference type="PANTHER" id="PTHR23267">
    <property type="entry name" value="IMMUNOGLOBULIN LIGHT CHAIN"/>
    <property type="match status" value="1"/>
</dbReference>
<dbReference type="Pfam" id="PF07686">
    <property type="entry name" value="V-set"/>
    <property type="match status" value="1"/>
</dbReference>
<dbReference type="SMART" id="SM00409">
    <property type="entry name" value="IG"/>
    <property type="match status" value="1"/>
</dbReference>
<dbReference type="SMART" id="SM00406">
    <property type="entry name" value="IGv"/>
    <property type="match status" value="1"/>
</dbReference>
<dbReference type="SUPFAM" id="SSF48726">
    <property type="entry name" value="Immunoglobulin"/>
    <property type="match status" value="1"/>
</dbReference>
<dbReference type="PROSITE" id="PS50835">
    <property type="entry name" value="IG_LIKE"/>
    <property type="match status" value="1"/>
</dbReference>
<protein>
    <recommendedName>
        <fullName evidence="4 9">Immunoglobulin kappa variable 1-27</fullName>
    </recommendedName>
</protein>
<proteinExistence type="evidence at protein level"/>
<organism>
    <name type="scientific">Homo sapiens</name>
    <name type="common">Human</name>
    <dbReference type="NCBI Taxonomy" id="9606"/>
    <lineage>
        <taxon>Eukaryota</taxon>
        <taxon>Metazoa</taxon>
        <taxon>Chordata</taxon>
        <taxon>Craniata</taxon>
        <taxon>Vertebrata</taxon>
        <taxon>Euteleostomi</taxon>
        <taxon>Mammalia</taxon>
        <taxon>Eutheria</taxon>
        <taxon>Euarchontoglires</taxon>
        <taxon>Primates</taxon>
        <taxon>Haplorrhini</taxon>
        <taxon>Catarrhini</taxon>
        <taxon>Hominidae</taxon>
        <taxon>Homo</taxon>
    </lineage>
</organism>
<sequence>MDMRVPAQLLGLLLLWLPDTRCDIQMTQSPSSLSASVGDRVTITCRASQGISNYLAWYQQKPGKVPKLLIYAASTLQSGVPSRFSGSGSGTDFTLTISSLQPEDVATYYCQKYNSAP</sequence>
<feature type="signal peptide" evidence="2">
    <location>
        <begin position="1"/>
        <end position="22"/>
    </location>
</feature>
<feature type="chain" id="PRO_5001705264" description="Immunoglobulin kappa variable 1-27" evidence="2">
    <location>
        <begin position="23"/>
        <end position="117"/>
    </location>
</feature>
<feature type="domain" description="Ig-like" evidence="3">
    <location>
        <begin position="23"/>
        <end position="117" status="greater than"/>
    </location>
</feature>
<feature type="region of interest" description="Framework-1" evidence="1">
    <location>
        <begin position="23"/>
        <end position="45"/>
    </location>
</feature>
<feature type="region of interest" description="Complementarity-determining-1" evidence="1">
    <location>
        <begin position="46"/>
        <end position="56"/>
    </location>
</feature>
<feature type="region of interest" description="Framework-2" evidence="1">
    <location>
        <begin position="57"/>
        <end position="71"/>
    </location>
</feature>
<feature type="region of interest" description="Complementarity-determining-2" evidence="1">
    <location>
        <begin position="72"/>
        <end position="78"/>
    </location>
</feature>
<feature type="region of interest" description="Framework-3" evidence="1">
    <location>
        <begin position="79"/>
        <end position="110"/>
    </location>
</feature>
<feature type="region of interest" description="Complementarity-determining-3" evidence="1">
    <location>
        <begin position="111"/>
        <end position="117" status="greater than"/>
    </location>
</feature>
<feature type="disulfide bond" evidence="3">
    <location>
        <begin position="45"/>
        <end position="110"/>
    </location>
</feature>
<feature type="non-terminal residue">
    <location>
        <position position="117"/>
    </location>
</feature>
<accession>A0A075B6S5</accession>
<reference key="1">
    <citation type="journal article" date="2005" name="Nature">
        <title>Generation and annotation of the DNA sequences of human chromosomes 2 and 4.</title>
        <authorList>
            <person name="Hillier L.W."/>
            <person name="Graves T.A."/>
            <person name="Fulton R.S."/>
            <person name="Fulton L.A."/>
            <person name="Pepin K.H."/>
            <person name="Minx P."/>
            <person name="Wagner-McPherson C."/>
            <person name="Layman D."/>
            <person name="Wylie K."/>
            <person name="Sekhon M."/>
            <person name="Becker M.C."/>
            <person name="Fewell G.A."/>
            <person name="Delehaunty K.D."/>
            <person name="Miner T.L."/>
            <person name="Nash W.E."/>
            <person name="Kremitzki C."/>
            <person name="Oddy L."/>
            <person name="Du H."/>
            <person name="Sun H."/>
            <person name="Bradshaw-Cordum H."/>
            <person name="Ali J."/>
            <person name="Carter J."/>
            <person name="Cordes M."/>
            <person name="Harris A."/>
            <person name="Isak A."/>
            <person name="van Brunt A."/>
            <person name="Nguyen C."/>
            <person name="Du F."/>
            <person name="Courtney L."/>
            <person name="Kalicki J."/>
            <person name="Ozersky P."/>
            <person name="Abbott S."/>
            <person name="Armstrong J."/>
            <person name="Belter E.A."/>
            <person name="Caruso L."/>
            <person name="Cedroni M."/>
            <person name="Cotton M."/>
            <person name="Davidson T."/>
            <person name="Desai A."/>
            <person name="Elliott G."/>
            <person name="Erb T."/>
            <person name="Fronick C."/>
            <person name="Gaige T."/>
            <person name="Haakenson W."/>
            <person name="Haglund K."/>
            <person name="Holmes A."/>
            <person name="Harkins R."/>
            <person name="Kim K."/>
            <person name="Kruchowski S.S."/>
            <person name="Strong C.M."/>
            <person name="Grewal N."/>
            <person name="Goyea E."/>
            <person name="Hou S."/>
            <person name="Levy A."/>
            <person name="Martinka S."/>
            <person name="Mead K."/>
            <person name="McLellan M.D."/>
            <person name="Meyer R."/>
            <person name="Randall-Maher J."/>
            <person name="Tomlinson C."/>
            <person name="Dauphin-Kohlberg S."/>
            <person name="Kozlowicz-Reilly A."/>
            <person name="Shah N."/>
            <person name="Swearengen-Shahid S."/>
            <person name="Snider J."/>
            <person name="Strong J.T."/>
            <person name="Thompson J."/>
            <person name="Yoakum M."/>
            <person name="Leonard S."/>
            <person name="Pearman C."/>
            <person name="Trani L."/>
            <person name="Radionenko M."/>
            <person name="Waligorski J.E."/>
            <person name="Wang C."/>
            <person name="Rock S.M."/>
            <person name="Tin-Wollam A.-M."/>
            <person name="Maupin R."/>
            <person name="Latreille P."/>
            <person name="Wendl M.C."/>
            <person name="Yang S.-P."/>
            <person name="Pohl C."/>
            <person name="Wallis J.W."/>
            <person name="Spieth J."/>
            <person name="Bieri T.A."/>
            <person name="Berkowicz N."/>
            <person name="Nelson J.O."/>
            <person name="Osborne J."/>
            <person name="Ding L."/>
            <person name="Meyer R."/>
            <person name="Sabo A."/>
            <person name="Shotland Y."/>
            <person name="Sinha P."/>
            <person name="Wohldmann P.E."/>
            <person name="Cook L.L."/>
            <person name="Hickenbotham M.T."/>
            <person name="Eldred J."/>
            <person name="Williams D."/>
            <person name="Jones T.A."/>
            <person name="She X."/>
            <person name="Ciccarelli F.D."/>
            <person name="Izaurralde E."/>
            <person name="Taylor J."/>
            <person name="Schmutz J."/>
            <person name="Myers R.M."/>
            <person name="Cox D.R."/>
            <person name="Huang X."/>
            <person name="McPherson J.D."/>
            <person name="Mardis E.R."/>
            <person name="Clifton S.W."/>
            <person name="Warren W.C."/>
            <person name="Chinwalla A.T."/>
            <person name="Eddy S.R."/>
            <person name="Marra M.A."/>
            <person name="Ovcharenko I."/>
            <person name="Furey T.S."/>
            <person name="Miller W."/>
            <person name="Eichler E.E."/>
            <person name="Bork P."/>
            <person name="Suyama M."/>
            <person name="Torrents D."/>
            <person name="Waterston R.H."/>
            <person name="Wilson R.K."/>
        </authorList>
    </citation>
    <scope>NUCLEOTIDE SEQUENCE [LARGE SCALE GENOMIC DNA] (IMGT ALLELE IGKV1-27*01)</scope>
</reference>
<reference key="2">
    <citation type="journal article" date="2001" name="Exp. Clin. Immunogenet.">
        <title>Nomenclature of the human immunoglobulin kappa (IGK) genes.</title>
        <authorList>
            <person name="Lefranc M.P."/>
        </authorList>
    </citation>
    <scope>NOMEMCLATURE</scope>
</reference>
<reference key="3">
    <citation type="book" date="2001" name="The Immunoglobulin FactsBook.">
        <title>The Immunoglobulin FactsBook.</title>
        <editorList>
            <person name="Lefranc M.P."/>
            <person name="Lefranc G."/>
        </editorList>
        <authorList>
            <person name="Lefranc M.P."/>
            <person name="Lefranc G."/>
        </authorList>
    </citation>
    <scope>NOMENCLATURE</scope>
</reference>
<reference key="4">
    <citation type="journal article" date="2007" name="Annu. Rev. Genet.">
        <title>Immunoglobulin somatic hypermutation.</title>
        <authorList>
            <person name="Teng G."/>
            <person name="Papavasiliou F.N."/>
        </authorList>
    </citation>
    <scope>REVIEW ON SOMATIC HYPERMUTATION</scope>
</reference>
<reference key="5">
    <citation type="journal article" date="2010" name="J. Allergy Clin. Immunol.">
        <title>Structure and function of immunoglobulins.</title>
        <authorList>
            <person name="Schroeder H.W. Jr."/>
            <person name="Cavacini L."/>
        </authorList>
    </citation>
    <scope>REVIEW ON IMMUNOGLOBULINS</scope>
</reference>
<reference key="6">
    <citation type="journal article" date="2012" name="Nat. Rev. Immunol.">
        <title>Molecular programming of B cell memory.</title>
        <authorList>
            <person name="McHeyzer-Williams M."/>
            <person name="Okitsu S."/>
            <person name="Wang N."/>
            <person name="McHeyzer-Williams L."/>
        </authorList>
    </citation>
    <scope>REVIEW ON FUNCTION</scope>
</reference>
<reference key="7">
    <citation type="journal article" date="2014" name="Front. Immunol.">
        <title>Immunoglobulin and T Cell Receptor Genes: IMGT((R)) and the Birth and Rise of Immunoinformatics.</title>
        <authorList>
            <person name="Lefranc M.P."/>
        </authorList>
    </citation>
    <scope>NOMENCLATURE</scope>
</reference>
<keyword id="KW-1064">Adaptive immunity</keyword>
<keyword id="KW-1003">Cell membrane</keyword>
<keyword id="KW-1015">Disulfide bond</keyword>
<keyword id="KW-0391">Immunity</keyword>
<keyword id="KW-1280">Immunoglobulin</keyword>
<keyword id="KW-0393">Immunoglobulin domain</keyword>
<keyword id="KW-0472">Membrane</keyword>
<keyword id="KW-1267">Proteomics identification</keyword>
<keyword id="KW-1185">Reference proteome</keyword>
<keyword id="KW-0964">Secreted</keyword>
<keyword id="KW-0732">Signal</keyword>
<name>KV127_HUMAN</name>
<gene>
    <name evidence="4 9" type="primary">IGKV1-27</name>
</gene>
<comment type="function">
    <text evidence="5 6 7 8">V region of the variable domain of immunoglobulin light chains that participates in the antigen recognition (PubMed:24600447). Immunoglobulins, also known as antibodies, are membrane-bound or secreted glycoproteins produced by B lymphocytes. In the recognition phase of humoral immunity, the membrane-bound immunoglobulins serve as receptors which, upon binding of a specific antigen, trigger the clonal expansion and differentiation of B lymphocytes into immunoglobulins-secreting plasma cells. Secreted immunoglobulins mediate the effector phase of humoral immunity, which results in the elimination of bound antigens (PubMed:20176268, PubMed:22158414). The antigen binding site is formed by the variable domain of one heavy chain, together with that of its associated light chain. Thus, each immunoglobulin has two antigen binding sites with remarkable affinity for a particular antigen. The variable domains are assembled by a process called V-(D)-J rearrangement and can then be subjected to somatic hypermutations which, after exposure to antigen and selection, allow affinity maturation for a particular antigen (PubMed:17576170, PubMed:20176268).</text>
</comment>
<comment type="subunit">
    <text evidence="6">Immunoglobulins are composed of two identical heavy chains and two identical light chains; disulfide-linked.</text>
</comment>
<comment type="subcellular location">
    <subcellularLocation>
        <location evidence="6 7">Secreted</location>
    </subcellularLocation>
    <subcellularLocation>
        <location evidence="6 7">Cell membrane</location>
    </subcellularLocation>
</comment>
<comment type="polymorphism">
    <text>There are several alleles. The sequence shown is that of IMGT allele IGKV1-27*01.</text>
</comment>
<comment type="caution">
    <text evidence="10">For an example of a full-length immunoglobulin kappa light chain see AC P0DOX7.</text>
</comment>
<evidence type="ECO:0000250" key="1">
    <source>
        <dbReference type="UniProtKB" id="P01602"/>
    </source>
</evidence>
<evidence type="ECO:0000255" key="2"/>
<evidence type="ECO:0000255" key="3">
    <source>
        <dbReference type="PROSITE-ProRule" id="PRU00114"/>
    </source>
</evidence>
<evidence type="ECO:0000303" key="4">
    <source>
    </source>
</evidence>
<evidence type="ECO:0000303" key="5">
    <source>
    </source>
</evidence>
<evidence type="ECO:0000303" key="6">
    <source>
    </source>
</evidence>
<evidence type="ECO:0000303" key="7">
    <source>
    </source>
</evidence>
<evidence type="ECO:0000303" key="8">
    <source>
    </source>
</evidence>
<evidence type="ECO:0000303" key="9">
    <source ref="3"/>
</evidence>
<evidence type="ECO:0000305" key="10"/>